<comment type="function">
    <text>Rubredoxin is a small nonheme, iron protein lacking acid-labile sulfide. Its single Fe, chelated to 4 Cys, functions as an electron acceptor and may also stabilize the conformation of the molecule.</text>
</comment>
<comment type="cofactor">
    <cofactor evidence="1">
        <name>Fe(3+)</name>
        <dbReference type="ChEBI" id="CHEBI:29034"/>
    </cofactor>
    <text evidence="1">Binds 1 Fe(3+) ion per subunit.</text>
</comment>
<comment type="similarity">
    <text evidence="3">Belongs to the rubredoxin family.</text>
</comment>
<protein>
    <recommendedName>
        <fullName>Rubredoxin</fullName>
        <shortName>Rd</shortName>
    </recommendedName>
</protein>
<gene>
    <name type="ordered locus">Tthe_0549</name>
</gene>
<evidence type="ECO:0000250" key="1"/>
<evidence type="ECO:0000255" key="2">
    <source>
        <dbReference type="PROSITE-ProRule" id="PRU00241"/>
    </source>
</evidence>
<evidence type="ECO:0000305" key="3"/>
<dbReference type="EMBL" id="CP002171">
    <property type="protein sequence ID" value="ADL68111.1"/>
    <property type="molecule type" value="Genomic_DNA"/>
</dbReference>
<dbReference type="PIR" id="A33173">
    <property type="entry name" value="A33173"/>
</dbReference>
<dbReference type="RefSeq" id="WP_013297086.1">
    <property type="nucleotide sequence ID" value="NC_014410.1"/>
</dbReference>
<dbReference type="SMR" id="P19500"/>
<dbReference type="STRING" id="580327.Tthe_0549"/>
<dbReference type="GeneID" id="93863437"/>
<dbReference type="KEGG" id="ttm:Tthe_0549"/>
<dbReference type="eggNOG" id="COG1773">
    <property type="taxonomic scope" value="Bacteria"/>
</dbReference>
<dbReference type="HOGENOM" id="CLU_128747_3_3_9"/>
<dbReference type="OrthoDB" id="9799749at2"/>
<dbReference type="Proteomes" id="UP000001626">
    <property type="component" value="Chromosome"/>
</dbReference>
<dbReference type="GO" id="GO:0009055">
    <property type="term" value="F:electron transfer activity"/>
    <property type="evidence" value="ECO:0007669"/>
    <property type="project" value="InterPro"/>
</dbReference>
<dbReference type="GO" id="GO:0005506">
    <property type="term" value="F:iron ion binding"/>
    <property type="evidence" value="ECO:0007669"/>
    <property type="project" value="InterPro"/>
</dbReference>
<dbReference type="GO" id="GO:0043448">
    <property type="term" value="P:alkane catabolic process"/>
    <property type="evidence" value="ECO:0007669"/>
    <property type="project" value="TreeGrafter"/>
</dbReference>
<dbReference type="CDD" id="cd00730">
    <property type="entry name" value="rubredoxin"/>
    <property type="match status" value="1"/>
</dbReference>
<dbReference type="FunFam" id="2.20.28.10:FF:000001">
    <property type="entry name" value="Rubredoxin"/>
    <property type="match status" value="1"/>
</dbReference>
<dbReference type="Gene3D" id="2.20.28.10">
    <property type="match status" value="1"/>
</dbReference>
<dbReference type="InterPro" id="IPR024922">
    <property type="entry name" value="Rubredoxin"/>
</dbReference>
<dbReference type="InterPro" id="IPR024934">
    <property type="entry name" value="Rubredoxin-like_dom"/>
</dbReference>
<dbReference type="InterPro" id="IPR024935">
    <property type="entry name" value="Rubredoxin_dom"/>
</dbReference>
<dbReference type="InterPro" id="IPR050526">
    <property type="entry name" value="Rubredoxin_ET"/>
</dbReference>
<dbReference type="InterPro" id="IPR018527">
    <property type="entry name" value="Rubredoxin_Fe_BS"/>
</dbReference>
<dbReference type="NCBIfam" id="NF045768">
    <property type="entry name" value="RubredRD"/>
    <property type="match status" value="1"/>
</dbReference>
<dbReference type="PANTHER" id="PTHR47627">
    <property type="entry name" value="RUBREDOXIN"/>
    <property type="match status" value="1"/>
</dbReference>
<dbReference type="PANTHER" id="PTHR47627:SF1">
    <property type="entry name" value="RUBREDOXIN-1-RELATED"/>
    <property type="match status" value="1"/>
</dbReference>
<dbReference type="Pfam" id="PF00301">
    <property type="entry name" value="Rubredoxin"/>
    <property type="match status" value="1"/>
</dbReference>
<dbReference type="PIRSF" id="PIRSF000071">
    <property type="entry name" value="Rubredoxin"/>
    <property type="match status" value="1"/>
</dbReference>
<dbReference type="PRINTS" id="PR00163">
    <property type="entry name" value="RUBREDOXIN"/>
</dbReference>
<dbReference type="SUPFAM" id="SSF57802">
    <property type="entry name" value="Rubredoxin-like"/>
    <property type="match status" value="1"/>
</dbReference>
<dbReference type="PROSITE" id="PS00202">
    <property type="entry name" value="RUBREDOXIN"/>
    <property type="match status" value="1"/>
</dbReference>
<dbReference type="PROSITE" id="PS50903">
    <property type="entry name" value="RUBREDOXIN_LIKE"/>
    <property type="match status" value="1"/>
</dbReference>
<accession>P19500</accession>
<accession>D9TSU6</accession>
<feature type="chain" id="PRO_0000135034" description="Rubredoxin">
    <location>
        <begin position="1"/>
        <end position="52"/>
    </location>
</feature>
<feature type="domain" description="Rubredoxin-like" evidence="2">
    <location>
        <begin position="1"/>
        <end position="52"/>
    </location>
</feature>
<feature type="binding site" evidence="2">
    <location>
        <position position="6"/>
    </location>
    <ligand>
        <name>Fe cation</name>
        <dbReference type="ChEBI" id="CHEBI:24875"/>
    </ligand>
</feature>
<feature type="binding site" evidence="2">
    <location>
        <position position="9"/>
    </location>
    <ligand>
        <name>Fe cation</name>
        <dbReference type="ChEBI" id="CHEBI:24875"/>
    </ligand>
</feature>
<feature type="binding site" evidence="2">
    <location>
        <position position="39"/>
    </location>
    <ligand>
        <name>Fe cation</name>
        <dbReference type="ChEBI" id="CHEBI:24875"/>
    </ligand>
</feature>
<feature type="binding site" evidence="2">
    <location>
        <position position="42"/>
    </location>
    <ligand>
        <name>Fe cation</name>
        <dbReference type="ChEBI" id="CHEBI:24875"/>
    </ligand>
</feature>
<keyword id="KW-0903">Direct protein sequencing</keyword>
<keyword id="KW-0249">Electron transport</keyword>
<keyword id="KW-0408">Iron</keyword>
<keyword id="KW-0479">Metal-binding</keyword>
<keyword id="KW-1185">Reference proteome</keyword>
<keyword id="KW-0813">Transport</keyword>
<name>RUBR_THETC</name>
<proteinExistence type="evidence at protein level"/>
<reference key="1">
    <citation type="journal article" date="1990" name="Biochem. J.">
        <title>Rubredoxin from Clostridium thermosaccharolyticum. Amino acid sequence, mass-spectrometric and preliminary crystallographic data.</title>
        <authorList>
            <person name="Meyer J."/>
            <person name="Gagnon J."/>
            <person name="Sieker L.C."/>
            <person name="van Dorsselaer A."/>
            <person name="Moulis J.-M."/>
        </authorList>
    </citation>
    <scope>PROTEIN SEQUENCE</scope>
    <source>
        <strain>ATCC 7956 / DSM 571 / NCIMB 9385 / NCA 3814 / NCTC 13789 / WDCM 00135 / 2032</strain>
    </source>
</reference>
<reference key="2">
    <citation type="submission" date="2010-08" db="EMBL/GenBank/DDBJ databases">
        <title>Complete sequence of Thermoanaerobacterium thermosaccharolyticum DSM 571.</title>
        <authorList>
            <consortium name="US DOE Joint Genome Institute"/>
            <person name="Lucas S."/>
            <person name="Copeland A."/>
            <person name="Lapidus A."/>
            <person name="Cheng J.-F."/>
            <person name="Bruce D."/>
            <person name="Goodwin L."/>
            <person name="Pitluck S."/>
            <person name="Teshima H."/>
            <person name="Detter J.C."/>
            <person name="Han C."/>
            <person name="Tapia R."/>
            <person name="Land M."/>
            <person name="Hauser L."/>
            <person name="Chang Y.-J."/>
            <person name="Jeffries C."/>
            <person name="Kyrpides N."/>
            <person name="Ivanova N."/>
            <person name="Mikhailova N."/>
            <person name="Hemme C.L."/>
            <person name="Woyke T."/>
        </authorList>
    </citation>
    <scope>NUCLEOTIDE SEQUENCE [LARGE SCALE GENOMIC DNA]</scope>
    <source>
        <strain>ATCC 7956 / DSM 571 / NCIMB 9385 / NCA 3814 / NCTC 13789 / WDCM 00135 / 2032</strain>
    </source>
</reference>
<sequence length="52" mass="5909">MEKWQCTVCGYIYDPEVGDPTQNIPPGTKFEDLPDDWVCPDCGVGKDQFEKI</sequence>
<organism>
    <name type="scientific">Thermoanaerobacterium thermosaccharolyticum (strain ATCC 7956 / DSM 571 / NCIMB 9385 / NCA 3814 / NCTC 13789 / WDCM 00135 / 2032)</name>
    <name type="common">Clostridium thermosaccharolyticum</name>
    <dbReference type="NCBI Taxonomy" id="580327"/>
    <lineage>
        <taxon>Bacteria</taxon>
        <taxon>Bacillati</taxon>
        <taxon>Bacillota</taxon>
        <taxon>Clostridia</taxon>
        <taxon>Thermoanaerobacterales</taxon>
        <taxon>Thermoanaerobacteraceae</taxon>
        <taxon>Thermoanaerobacterium</taxon>
    </lineage>
</organism>